<proteinExistence type="inferred from homology"/>
<reference key="1">
    <citation type="journal article" date="2003" name="Proc. Natl. Acad. Sci. U.S.A.">
        <title>Genome sequence of the cyanobacterium Prochlorococcus marinus SS120, a nearly minimal oxyphototrophic genome.</title>
        <authorList>
            <person name="Dufresne A."/>
            <person name="Salanoubat M."/>
            <person name="Partensky F."/>
            <person name="Artiguenave F."/>
            <person name="Axmann I.M."/>
            <person name="Barbe V."/>
            <person name="Duprat S."/>
            <person name="Galperin M.Y."/>
            <person name="Koonin E.V."/>
            <person name="Le Gall F."/>
            <person name="Makarova K.S."/>
            <person name="Ostrowski M."/>
            <person name="Oztas S."/>
            <person name="Robert C."/>
            <person name="Rogozin I.B."/>
            <person name="Scanlan D.J."/>
            <person name="Tandeau de Marsac N."/>
            <person name="Weissenbach J."/>
            <person name="Wincker P."/>
            <person name="Wolf Y.I."/>
            <person name="Hess W.R."/>
        </authorList>
    </citation>
    <scope>NUCLEOTIDE SEQUENCE [LARGE SCALE GENOMIC DNA]</scope>
    <source>
        <strain>SARG / CCMP1375 / SS120</strain>
    </source>
</reference>
<gene>
    <name evidence="1" type="primary">hisZ</name>
    <name type="ordered locus">Pro_0936</name>
</gene>
<evidence type="ECO:0000255" key="1">
    <source>
        <dbReference type="HAMAP-Rule" id="MF_00125"/>
    </source>
</evidence>
<keyword id="KW-0028">Amino-acid biosynthesis</keyword>
<keyword id="KW-0963">Cytoplasm</keyword>
<keyword id="KW-0368">Histidine biosynthesis</keyword>
<keyword id="KW-1185">Reference proteome</keyword>
<dbReference type="EMBL" id="AE017126">
    <property type="protein sequence ID" value="AAP99980.1"/>
    <property type="molecule type" value="Genomic_DNA"/>
</dbReference>
<dbReference type="RefSeq" id="NP_875328.1">
    <property type="nucleotide sequence ID" value="NC_005042.1"/>
</dbReference>
<dbReference type="RefSeq" id="WP_011125088.1">
    <property type="nucleotide sequence ID" value="NC_005042.1"/>
</dbReference>
<dbReference type="SMR" id="Q7VC06"/>
<dbReference type="STRING" id="167539.Pro_0936"/>
<dbReference type="EnsemblBacteria" id="AAP99980">
    <property type="protein sequence ID" value="AAP99980"/>
    <property type="gene ID" value="Pro_0936"/>
</dbReference>
<dbReference type="KEGG" id="pma:Pro_0936"/>
<dbReference type="PATRIC" id="fig|167539.5.peg.985"/>
<dbReference type="eggNOG" id="COG3705">
    <property type="taxonomic scope" value="Bacteria"/>
</dbReference>
<dbReference type="HOGENOM" id="CLU_025113_0_2_3"/>
<dbReference type="OrthoDB" id="9800814at2"/>
<dbReference type="UniPathway" id="UPA00031">
    <property type="reaction ID" value="UER00006"/>
</dbReference>
<dbReference type="Proteomes" id="UP000001420">
    <property type="component" value="Chromosome"/>
</dbReference>
<dbReference type="GO" id="GO:0005737">
    <property type="term" value="C:cytoplasm"/>
    <property type="evidence" value="ECO:0007669"/>
    <property type="project" value="UniProtKB-SubCell"/>
</dbReference>
<dbReference type="GO" id="GO:0004821">
    <property type="term" value="F:histidine-tRNA ligase activity"/>
    <property type="evidence" value="ECO:0007669"/>
    <property type="project" value="TreeGrafter"/>
</dbReference>
<dbReference type="GO" id="GO:0006427">
    <property type="term" value="P:histidyl-tRNA aminoacylation"/>
    <property type="evidence" value="ECO:0007669"/>
    <property type="project" value="TreeGrafter"/>
</dbReference>
<dbReference type="GO" id="GO:0000105">
    <property type="term" value="P:L-histidine biosynthetic process"/>
    <property type="evidence" value="ECO:0007669"/>
    <property type="project" value="UniProtKB-UniRule"/>
</dbReference>
<dbReference type="Gene3D" id="3.30.930.10">
    <property type="entry name" value="Bira Bifunctional Protein, Domain 2"/>
    <property type="match status" value="1"/>
</dbReference>
<dbReference type="HAMAP" id="MF_00125">
    <property type="entry name" value="HisZ"/>
    <property type="match status" value="1"/>
</dbReference>
<dbReference type="InterPro" id="IPR045864">
    <property type="entry name" value="aa-tRNA-synth_II/BPL/LPL"/>
</dbReference>
<dbReference type="InterPro" id="IPR041715">
    <property type="entry name" value="HisRS-like_core"/>
</dbReference>
<dbReference type="InterPro" id="IPR004516">
    <property type="entry name" value="HisRS/HisZ"/>
</dbReference>
<dbReference type="InterPro" id="IPR004517">
    <property type="entry name" value="HisZ"/>
</dbReference>
<dbReference type="NCBIfam" id="TIGR00443">
    <property type="entry name" value="hisZ_biosyn_reg"/>
    <property type="match status" value="1"/>
</dbReference>
<dbReference type="NCBIfam" id="NF008939">
    <property type="entry name" value="PRK12292.2-1"/>
    <property type="match status" value="1"/>
</dbReference>
<dbReference type="PANTHER" id="PTHR43707:SF1">
    <property type="entry name" value="HISTIDINE--TRNA LIGASE, MITOCHONDRIAL-RELATED"/>
    <property type="match status" value="1"/>
</dbReference>
<dbReference type="PANTHER" id="PTHR43707">
    <property type="entry name" value="HISTIDYL-TRNA SYNTHETASE"/>
    <property type="match status" value="1"/>
</dbReference>
<dbReference type="Pfam" id="PF13393">
    <property type="entry name" value="tRNA-synt_His"/>
    <property type="match status" value="1"/>
</dbReference>
<dbReference type="PIRSF" id="PIRSF001549">
    <property type="entry name" value="His-tRNA_synth"/>
    <property type="match status" value="1"/>
</dbReference>
<dbReference type="SUPFAM" id="SSF55681">
    <property type="entry name" value="Class II aaRS and biotin synthetases"/>
    <property type="match status" value="1"/>
</dbReference>
<protein>
    <recommendedName>
        <fullName evidence="1">ATP phosphoribosyltransferase regulatory subunit</fullName>
    </recommendedName>
</protein>
<sequence>MPIQPAFGNKDLNPQEVRKNQLISSRLSSIYERWGYEEVSPPKVERLETLTACGGISNKEIVKLVADDPIGLRPDMTASIARAASTRLAYKDRPLRLWTSGTIFKSKEDCDGKFVIEEGLQSGVELIGISDMAAEIELLYLLLDSMNQLEICSNQNPILLIGHQSILKLILSGISNDYKNKIQKYLTNYDLVETEDLDIDIEIKNKLLKVLKIRGNPSDVLDKLVNIYGSNTLFDELRRLFLIIEPISKKYGVSIQLDPTYQPHFKLYNGLIFQLICQTDYAPKVIARGGRYDDLVNSFTTSIENETGAGFSFSIDKIRELKLKVEYDDKKVARTLIAFSKSKRYEDALEKQLEIHRKGSMAMVELKPCDTKKEAEFLVNKRGFDKLVWIS</sequence>
<organism>
    <name type="scientific">Prochlorococcus marinus (strain SARG / CCMP1375 / SS120)</name>
    <dbReference type="NCBI Taxonomy" id="167539"/>
    <lineage>
        <taxon>Bacteria</taxon>
        <taxon>Bacillati</taxon>
        <taxon>Cyanobacteriota</taxon>
        <taxon>Cyanophyceae</taxon>
        <taxon>Synechococcales</taxon>
        <taxon>Prochlorococcaceae</taxon>
        <taxon>Prochlorococcus</taxon>
    </lineage>
</organism>
<comment type="function">
    <text evidence="1">Required for the first step of histidine biosynthesis. May allow the feedback regulation of ATP phosphoribosyltransferase activity by histidine.</text>
</comment>
<comment type="pathway">
    <text evidence="1">Amino-acid biosynthesis; L-histidine biosynthesis; L-histidine from 5-phospho-alpha-D-ribose 1-diphosphate: step 1/9.</text>
</comment>
<comment type="subunit">
    <text evidence="1">Heteromultimer composed of HisG and HisZ subunits.</text>
</comment>
<comment type="subcellular location">
    <subcellularLocation>
        <location evidence="1">Cytoplasm</location>
    </subcellularLocation>
</comment>
<comment type="miscellaneous">
    <text>This function is generally fulfilled by the C-terminal part of HisG, which is missing in some bacteria such as this one.</text>
</comment>
<comment type="similarity">
    <text evidence="1">Belongs to the class-II aminoacyl-tRNA synthetase family. HisZ subfamily.</text>
</comment>
<feature type="chain" id="PRO_0000171049" description="ATP phosphoribosyltransferase regulatory subunit">
    <location>
        <begin position="1"/>
        <end position="391"/>
    </location>
</feature>
<name>HISZ_PROMA</name>
<accession>Q7VC06</accession>